<comment type="function">
    <text evidence="1 2">A P subtype restriction enzyme that recognizes the double-stranded sequence 5'-GGYRCC-3' and cleaves after G-1.</text>
</comment>
<comment type="catalytic activity">
    <reaction evidence="1">
        <text>Endonucleolytic cleavage of DNA to give specific double-stranded fragments with terminal 5'-phosphates.</text>
        <dbReference type="EC" id="3.1.21.4"/>
    </reaction>
</comment>
<evidence type="ECO:0000269" key="1">
    <source>
    </source>
</evidence>
<evidence type="ECO:0000303" key="2">
    <source>
    </source>
</evidence>
<evidence type="ECO:0000303" key="3">
    <source>
    </source>
</evidence>
<proteinExistence type="evidence at protein level"/>
<keyword id="KW-0255">Endonuclease</keyword>
<keyword id="KW-0378">Hydrolase</keyword>
<keyword id="KW-0540">Nuclease</keyword>
<keyword id="KW-0680">Restriction system</keyword>
<dbReference type="EC" id="3.1.21.4" evidence="1"/>
<dbReference type="EMBL" id="X55138">
    <property type="protein sequence ID" value="CAA38932.1"/>
    <property type="molecule type" value="Genomic_DNA"/>
</dbReference>
<dbReference type="PIR" id="S19706">
    <property type="entry name" value="S19706"/>
</dbReference>
<dbReference type="REBASE" id="1099">
    <property type="entry name" value="HgiCI"/>
</dbReference>
<dbReference type="PRO" id="PR:P25258"/>
<dbReference type="GO" id="GO:0009036">
    <property type="term" value="F:type II site-specific deoxyribonuclease activity"/>
    <property type="evidence" value="ECO:0007669"/>
    <property type="project" value="UniProtKB-EC"/>
</dbReference>
<dbReference type="GO" id="GO:0009307">
    <property type="term" value="P:DNA restriction-modification system"/>
    <property type="evidence" value="ECO:0007669"/>
    <property type="project" value="UniProtKB-KW"/>
</dbReference>
<dbReference type="Pfam" id="PF24447">
    <property type="entry name" value="RE_BanI"/>
    <property type="match status" value="1"/>
</dbReference>
<feature type="chain" id="PRO_0000077311" description="Type II restriction enzyme HgiCI">
    <location>
        <begin position="1"/>
        <end position="345"/>
    </location>
</feature>
<sequence>MNYQRSFEDLEFNAIKWWPQELSATVAEASVLPILISSQDLFISILKLSGTHPEQIFDVINAAQISANLFLKHLVVLADYGGEMIKRLGKEFQEIFPRMDSTLEYYMNYTFKGEQYTYIFKKLPIKGLDNSKLAIDGKAIIEIKPLSDLYRDMIMILLYGSTTEQFNLAGLEKCEIGTILGKNEIIYTYITQKYLYVSRITNGANTNSLGQIAQTYVCDILSKYLPNDYSVTRNGKILLSDLNSQDSTKTSFDILVEFADKKVGIEVSFQVTTNSTIERKAGQARDRQNRMHAHYYWIAYVIDGAGNFERSGAVRAICRYSDCTVAYSESEIAVLAAFIQEKFNA</sequence>
<protein>
    <recommendedName>
        <fullName evidence="2">Type II restriction enzyme HgiCI</fullName>
        <shortName evidence="3">R.HgiCI</shortName>
        <ecNumber evidence="1">3.1.21.4</ecNumber>
    </recommendedName>
    <alternativeName>
        <fullName>Endonuclease HgiCI</fullName>
    </alternativeName>
    <alternativeName>
        <fullName>Type-2 restriction enzyme HgiCI</fullName>
    </alternativeName>
</protein>
<accession>P25258</accession>
<gene>
    <name type="primary">hgiCIR</name>
</gene>
<organism>
    <name type="scientific">Herpetosiphon aurantiacus</name>
    <name type="common">Herpetosiphon giganteus</name>
    <dbReference type="NCBI Taxonomy" id="65"/>
    <lineage>
        <taxon>Bacteria</taxon>
        <taxon>Bacillati</taxon>
        <taxon>Chloroflexota</taxon>
        <taxon>Chloroflexia</taxon>
        <taxon>Herpetosiphonales</taxon>
        <taxon>Herpetosiphonaceae</taxon>
        <taxon>Herpetosiphon</taxon>
    </lineage>
</organism>
<reference key="1">
    <citation type="journal article" date="1991" name="Eur. J. Biochem.">
        <title>Cloning and molecular characterization of the HgiCI restriction/modification system from Herpetosiphon giganteus Hpg9 reveals high similarity to BanI.</title>
        <authorList>
            <person name="Erdmann D."/>
            <person name="Duesterhoeft A."/>
            <person name="Kroeger M."/>
        </authorList>
    </citation>
    <scope>NUCLEOTIDE SEQUENCE [GENOMIC DNA]</scope>
    <scope>FUNCTION</scope>
    <scope>CATALYTIC ACTIVITY</scope>
    <source>
        <strain>HPG9</strain>
    </source>
</reference>
<reference key="2">
    <citation type="journal article" date="1995" name="Gene">
        <title>Organization and gene expression within restriction-modification systems of Herpetosiphon giganteus.</title>
        <authorList>
            <person name="Kroeger M."/>
            <person name="Blum E."/>
            <person name="Deppe E."/>
            <person name="Duesterhoeft A."/>
            <person name="Erdmann D."/>
            <person name="Kilz S."/>
            <person name="Meyer-Rogge S."/>
            <person name="Moestl D."/>
        </authorList>
    </citation>
    <scope>DISCUSSION OF SEQUENCE</scope>
</reference>
<reference key="3">
    <citation type="journal article" date="2003" name="Nucleic Acids Res.">
        <title>A nomenclature for restriction enzymes, DNA methyltransferases, homing endonucleases and their genes.</title>
        <authorList>
            <person name="Roberts R.J."/>
            <person name="Belfort M."/>
            <person name="Bestor T."/>
            <person name="Bhagwat A.S."/>
            <person name="Bickle T.A."/>
            <person name="Bitinaite J."/>
            <person name="Blumenthal R.M."/>
            <person name="Degtyarev S.K."/>
            <person name="Dryden D.T."/>
            <person name="Dybvig K."/>
            <person name="Firman K."/>
            <person name="Gromova E.S."/>
            <person name="Gumport R.I."/>
            <person name="Halford S.E."/>
            <person name="Hattman S."/>
            <person name="Heitman J."/>
            <person name="Hornby D.P."/>
            <person name="Janulaitis A."/>
            <person name="Jeltsch A."/>
            <person name="Josephsen J."/>
            <person name="Kiss A."/>
            <person name="Klaenhammer T.R."/>
            <person name="Kobayashi I."/>
            <person name="Kong H."/>
            <person name="Krueger D.H."/>
            <person name="Lacks S."/>
            <person name="Marinus M.G."/>
            <person name="Miyahara M."/>
            <person name="Morgan R.D."/>
            <person name="Murray N.E."/>
            <person name="Nagaraja V."/>
            <person name="Piekarowicz A."/>
            <person name="Pingoud A."/>
            <person name="Raleigh E."/>
            <person name="Rao D.N."/>
            <person name="Reich N."/>
            <person name="Repin V.E."/>
            <person name="Selker E.U."/>
            <person name="Shaw P.C."/>
            <person name="Stein D.C."/>
            <person name="Stoddard B.L."/>
            <person name="Szybalski W."/>
            <person name="Trautner T.A."/>
            <person name="Van Etten J.L."/>
            <person name="Vitor J.M."/>
            <person name="Wilson G.G."/>
            <person name="Xu S.Y."/>
        </authorList>
    </citation>
    <scope>NOMENCLATURE</scope>
    <scope>SUBTYPE</scope>
</reference>
<name>T2C1_HERAU</name>